<evidence type="ECO:0000255" key="1">
    <source>
        <dbReference type="HAMAP-Rule" id="MF_01346"/>
    </source>
</evidence>
<dbReference type="EC" id="7.1.2.2" evidence="1"/>
<dbReference type="EMBL" id="CP000529">
    <property type="protein sequence ID" value="ABM37636.1"/>
    <property type="molecule type" value="Genomic_DNA"/>
</dbReference>
<dbReference type="RefSeq" id="WP_011801714.1">
    <property type="nucleotide sequence ID" value="NC_008781.1"/>
</dbReference>
<dbReference type="SMR" id="A1VPQ8"/>
<dbReference type="STRING" id="365044.Pnap_2329"/>
<dbReference type="KEGG" id="pna:Pnap_2329"/>
<dbReference type="eggNOG" id="COG0056">
    <property type="taxonomic scope" value="Bacteria"/>
</dbReference>
<dbReference type="HOGENOM" id="CLU_010091_2_1_4"/>
<dbReference type="OrthoDB" id="9803053at2"/>
<dbReference type="Proteomes" id="UP000000644">
    <property type="component" value="Chromosome"/>
</dbReference>
<dbReference type="GO" id="GO:0005886">
    <property type="term" value="C:plasma membrane"/>
    <property type="evidence" value="ECO:0007669"/>
    <property type="project" value="UniProtKB-SubCell"/>
</dbReference>
<dbReference type="GO" id="GO:0045259">
    <property type="term" value="C:proton-transporting ATP synthase complex"/>
    <property type="evidence" value="ECO:0007669"/>
    <property type="project" value="UniProtKB-KW"/>
</dbReference>
<dbReference type="GO" id="GO:0043531">
    <property type="term" value="F:ADP binding"/>
    <property type="evidence" value="ECO:0007669"/>
    <property type="project" value="TreeGrafter"/>
</dbReference>
<dbReference type="GO" id="GO:0005524">
    <property type="term" value="F:ATP binding"/>
    <property type="evidence" value="ECO:0007669"/>
    <property type="project" value="UniProtKB-UniRule"/>
</dbReference>
<dbReference type="GO" id="GO:0046933">
    <property type="term" value="F:proton-transporting ATP synthase activity, rotational mechanism"/>
    <property type="evidence" value="ECO:0007669"/>
    <property type="project" value="UniProtKB-UniRule"/>
</dbReference>
<dbReference type="CDD" id="cd18113">
    <property type="entry name" value="ATP-synt_F1_alpha_C"/>
    <property type="match status" value="1"/>
</dbReference>
<dbReference type="CDD" id="cd18116">
    <property type="entry name" value="ATP-synt_F1_alpha_N"/>
    <property type="match status" value="1"/>
</dbReference>
<dbReference type="CDD" id="cd01132">
    <property type="entry name" value="F1-ATPase_alpha_CD"/>
    <property type="match status" value="1"/>
</dbReference>
<dbReference type="FunFam" id="3.40.50.300:FF:000002">
    <property type="entry name" value="ATP synthase subunit alpha"/>
    <property type="match status" value="1"/>
</dbReference>
<dbReference type="Gene3D" id="2.40.30.20">
    <property type="match status" value="1"/>
</dbReference>
<dbReference type="Gene3D" id="1.20.150.20">
    <property type="entry name" value="ATP synthase alpha/beta chain, C-terminal domain"/>
    <property type="match status" value="1"/>
</dbReference>
<dbReference type="Gene3D" id="3.40.50.300">
    <property type="entry name" value="P-loop containing nucleotide triphosphate hydrolases"/>
    <property type="match status" value="1"/>
</dbReference>
<dbReference type="HAMAP" id="MF_01346">
    <property type="entry name" value="ATP_synth_alpha_bact"/>
    <property type="match status" value="1"/>
</dbReference>
<dbReference type="InterPro" id="IPR017710">
    <property type="entry name" value="Alt_ATP_synth_F1_asu"/>
</dbReference>
<dbReference type="InterPro" id="IPR023366">
    <property type="entry name" value="ATP_synth_asu-like_sf"/>
</dbReference>
<dbReference type="InterPro" id="IPR000793">
    <property type="entry name" value="ATP_synth_asu_C"/>
</dbReference>
<dbReference type="InterPro" id="IPR038376">
    <property type="entry name" value="ATP_synth_asu_C_sf"/>
</dbReference>
<dbReference type="InterPro" id="IPR033732">
    <property type="entry name" value="ATP_synth_F1_a_nt-bd_dom"/>
</dbReference>
<dbReference type="InterPro" id="IPR005294">
    <property type="entry name" value="ATP_synth_F1_asu"/>
</dbReference>
<dbReference type="InterPro" id="IPR020003">
    <property type="entry name" value="ATPase_a/bsu_AS"/>
</dbReference>
<dbReference type="InterPro" id="IPR004100">
    <property type="entry name" value="ATPase_F1/V1/A1_a/bsu_N"/>
</dbReference>
<dbReference type="InterPro" id="IPR036121">
    <property type="entry name" value="ATPase_F1/V1/A1_a/bsu_N_sf"/>
</dbReference>
<dbReference type="InterPro" id="IPR000194">
    <property type="entry name" value="ATPase_F1/V1/A1_a/bsu_nucl-bd"/>
</dbReference>
<dbReference type="InterPro" id="IPR027417">
    <property type="entry name" value="P-loop_NTPase"/>
</dbReference>
<dbReference type="NCBIfam" id="TIGR03324">
    <property type="entry name" value="alt_F1F0_F1_al"/>
    <property type="match status" value="1"/>
</dbReference>
<dbReference type="NCBIfam" id="TIGR00962">
    <property type="entry name" value="atpA"/>
    <property type="match status" value="1"/>
</dbReference>
<dbReference type="NCBIfam" id="NF009884">
    <property type="entry name" value="PRK13343.1"/>
    <property type="match status" value="1"/>
</dbReference>
<dbReference type="PANTHER" id="PTHR48082">
    <property type="entry name" value="ATP SYNTHASE SUBUNIT ALPHA, MITOCHONDRIAL"/>
    <property type="match status" value="1"/>
</dbReference>
<dbReference type="PANTHER" id="PTHR48082:SF2">
    <property type="entry name" value="ATP SYNTHASE SUBUNIT ALPHA, MITOCHONDRIAL"/>
    <property type="match status" value="1"/>
</dbReference>
<dbReference type="Pfam" id="PF00006">
    <property type="entry name" value="ATP-synt_ab"/>
    <property type="match status" value="1"/>
</dbReference>
<dbReference type="Pfam" id="PF00306">
    <property type="entry name" value="ATP-synt_ab_C"/>
    <property type="match status" value="1"/>
</dbReference>
<dbReference type="Pfam" id="PF02874">
    <property type="entry name" value="ATP-synt_ab_N"/>
    <property type="match status" value="1"/>
</dbReference>
<dbReference type="SUPFAM" id="SSF47917">
    <property type="entry name" value="C-terminal domain of alpha and beta subunits of F1 ATP synthase"/>
    <property type="match status" value="1"/>
</dbReference>
<dbReference type="SUPFAM" id="SSF50615">
    <property type="entry name" value="N-terminal domain of alpha and beta subunits of F1 ATP synthase"/>
    <property type="match status" value="1"/>
</dbReference>
<dbReference type="SUPFAM" id="SSF52540">
    <property type="entry name" value="P-loop containing nucleoside triphosphate hydrolases"/>
    <property type="match status" value="1"/>
</dbReference>
<dbReference type="PROSITE" id="PS00152">
    <property type="entry name" value="ATPASE_ALPHA_BETA"/>
    <property type="match status" value="1"/>
</dbReference>
<name>ATPA2_POLNA</name>
<feature type="chain" id="PRO_0000339045" description="ATP synthase subunit alpha 2">
    <location>
        <begin position="1"/>
        <end position="520"/>
    </location>
</feature>
<feature type="binding site" evidence="1">
    <location>
        <begin position="176"/>
        <end position="183"/>
    </location>
    <ligand>
        <name>ATP</name>
        <dbReference type="ChEBI" id="CHEBI:30616"/>
    </ligand>
</feature>
<feature type="site" description="Required for activity" evidence="1">
    <location>
        <position position="369"/>
    </location>
</feature>
<keyword id="KW-0066">ATP synthesis</keyword>
<keyword id="KW-0067">ATP-binding</keyword>
<keyword id="KW-0997">Cell inner membrane</keyword>
<keyword id="KW-1003">Cell membrane</keyword>
<keyword id="KW-0139">CF(1)</keyword>
<keyword id="KW-0375">Hydrogen ion transport</keyword>
<keyword id="KW-0406">Ion transport</keyword>
<keyword id="KW-0472">Membrane</keyword>
<keyword id="KW-0547">Nucleotide-binding</keyword>
<keyword id="KW-1185">Reference proteome</keyword>
<keyword id="KW-1278">Translocase</keyword>
<keyword id="KW-0813">Transport</keyword>
<reference key="1">
    <citation type="journal article" date="2009" name="Environ. Microbiol.">
        <title>The genome of Polaromonas naphthalenivorans strain CJ2, isolated from coal tar-contaminated sediment, reveals physiological and metabolic versatility and evolution through extensive horizontal gene transfer.</title>
        <authorList>
            <person name="Yagi J.M."/>
            <person name="Sims D."/>
            <person name="Brettin T."/>
            <person name="Bruce D."/>
            <person name="Madsen E.L."/>
        </authorList>
    </citation>
    <scope>NUCLEOTIDE SEQUENCE [LARGE SCALE GENOMIC DNA]</scope>
    <source>
        <strain>CJ2</strain>
    </source>
</reference>
<organism>
    <name type="scientific">Polaromonas naphthalenivorans (strain CJ2)</name>
    <dbReference type="NCBI Taxonomy" id="365044"/>
    <lineage>
        <taxon>Bacteria</taxon>
        <taxon>Pseudomonadati</taxon>
        <taxon>Pseudomonadota</taxon>
        <taxon>Betaproteobacteria</taxon>
        <taxon>Burkholderiales</taxon>
        <taxon>Comamonadaceae</taxon>
        <taxon>Polaromonas</taxon>
    </lineage>
</organism>
<protein>
    <recommendedName>
        <fullName evidence="1">ATP synthase subunit alpha 2</fullName>
        <ecNumber evidence="1">7.1.2.2</ecNumber>
    </recommendedName>
    <alternativeName>
        <fullName evidence="1">ATP synthase F1 sector subunit alpha 2</fullName>
    </alternativeName>
    <alternativeName>
        <fullName evidence="1">F-ATPase subunit alpha 2</fullName>
    </alternativeName>
</protein>
<accession>A1VPQ8</accession>
<comment type="function">
    <text evidence="1">Produces ATP from ADP in the presence of a proton gradient across the membrane. The alpha chain is a regulatory subunit.</text>
</comment>
<comment type="catalytic activity">
    <reaction evidence="1">
        <text>ATP + H2O + 4 H(+)(in) = ADP + phosphate + 5 H(+)(out)</text>
        <dbReference type="Rhea" id="RHEA:57720"/>
        <dbReference type="ChEBI" id="CHEBI:15377"/>
        <dbReference type="ChEBI" id="CHEBI:15378"/>
        <dbReference type="ChEBI" id="CHEBI:30616"/>
        <dbReference type="ChEBI" id="CHEBI:43474"/>
        <dbReference type="ChEBI" id="CHEBI:456216"/>
        <dbReference type="EC" id="7.1.2.2"/>
    </reaction>
</comment>
<comment type="subunit">
    <text evidence="1">F-type ATPases have 2 components, CF(1) - the catalytic core - and CF(0) - the membrane proton channel. CF(1) has five subunits: alpha(3), beta(3), gamma(1), delta(1), epsilon(1). CF(0) has three main subunits: a(1), b(2) and c(9-12). The alpha and beta chains form an alternating ring which encloses part of the gamma chain. CF(1) is attached to CF(0) by a central stalk formed by the gamma and epsilon chains, while a peripheral stalk is formed by the delta and b chains.</text>
</comment>
<comment type="subcellular location">
    <subcellularLocation>
        <location evidence="1">Cell inner membrane</location>
        <topology evidence="1">Peripheral membrane protein</topology>
    </subcellularLocation>
</comment>
<comment type="similarity">
    <text evidence="1">Belongs to the ATPase alpha/beta chains family.</text>
</comment>
<proteinExistence type="inferred from homology"/>
<gene>
    <name evidence="1" type="primary">atpA2</name>
    <name type="ordered locus">Pnap_2329</name>
</gene>
<sequence length="520" mass="55829">MSAPADTLKSALDRTFASLRHGLETYTAQLTPHEVGTITRVSTGIAMVSGLPGVGFEELVSFSGNVFGIAFNVDETEIGVVLLGDYGHLHAGDPVRRTGRVMDVAVGEGLLGRVIDPLGRPLDSLGPVVSSARLALERPAAPIMDRAPVTVPLQTGLKVVDALIPIGRGQRELILGDRQTGKTAIAVDTILNQRGQDVLCVYCAIGQRAAAVARTIAVLREKGAMEYTVVVVTEGNDPPGLAYIAPYAATSIAEHFMEMGRDVLVVYDDLTQHARAYRELSLLLRRPPGREAFPGDIFYIHSRLLERATHLRPERGGGSLTALPIIETEAQNMSAYIPTNLISITDGQIYLSPSLFELGVLPAVDVSKSVSRVGGKAQRAAYRAVTGDLKLAYAQFEELETFARFGARLDENTQKIIEHGRRIRACLQQPESAPVSMAGQITVLLALTAAFFDGVPLARMTAAEQAVLQAAATLPAELQTRFDTAMKLSEADRATLIQLARDALKPFVPPPAESRRTSAP</sequence>